<protein>
    <recommendedName>
        <fullName>Probable methionine--tRNA ligase, cytoplasmic</fullName>
        <ecNumber>6.1.1.10</ecNumber>
    </recommendedName>
    <alternativeName>
        <fullName>Methionyl-tRNA synthetase</fullName>
        <shortName>MetRS</shortName>
    </alternativeName>
</protein>
<comment type="catalytic activity">
    <reaction>
        <text>tRNA(Met) + L-methionine + ATP = L-methionyl-tRNA(Met) + AMP + diphosphate</text>
        <dbReference type="Rhea" id="RHEA:13481"/>
        <dbReference type="Rhea" id="RHEA-COMP:9667"/>
        <dbReference type="Rhea" id="RHEA-COMP:9698"/>
        <dbReference type="ChEBI" id="CHEBI:30616"/>
        <dbReference type="ChEBI" id="CHEBI:33019"/>
        <dbReference type="ChEBI" id="CHEBI:57844"/>
        <dbReference type="ChEBI" id="CHEBI:78442"/>
        <dbReference type="ChEBI" id="CHEBI:78530"/>
        <dbReference type="ChEBI" id="CHEBI:456215"/>
        <dbReference type="EC" id="6.1.1.10"/>
    </reaction>
</comment>
<comment type="subcellular location">
    <subcellularLocation>
        <location evidence="1">Cytoplasm</location>
    </subcellularLocation>
</comment>
<comment type="similarity">
    <text evidence="2">Belongs to the class-I aminoacyl-tRNA synthetase family.</text>
</comment>
<accession>Q8SQW5</accession>
<proteinExistence type="inferred from homology"/>
<gene>
    <name type="ordered locus">ECU11_0890</name>
</gene>
<name>SYMC_ENCCU</name>
<reference key="1">
    <citation type="journal article" date="2001" name="Nature">
        <title>Genome sequence and gene compaction of the eukaryote parasite Encephalitozoon cuniculi.</title>
        <authorList>
            <person name="Katinka M.D."/>
            <person name="Duprat S."/>
            <person name="Cornillot E."/>
            <person name="Metenier G."/>
            <person name="Thomarat F."/>
            <person name="Prensier G."/>
            <person name="Barbe V."/>
            <person name="Peyretaillade E."/>
            <person name="Brottier P."/>
            <person name="Wincker P."/>
            <person name="Delbac F."/>
            <person name="El Alaoui H."/>
            <person name="Peyret P."/>
            <person name="Saurin W."/>
            <person name="Gouy M."/>
            <person name="Weissenbach J."/>
            <person name="Vivares C.P."/>
        </authorList>
    </citation>
    <scope>NUCLEOTIDE SEQUENCE [LARGE SCALE GENOMIC DNA]</scope>
    <source>
        <strain>GB-M1</strain>
    </source>
</reference>
<evidence type="ECO:0000250" key="1"/>
<evidence type="ECO:0000305" key="2"/>
<dbReference type="EC" id="6.1.1.10"/>
<dbReference type="EMBL" id="AL590450">
    <property type="protein sequence ID" value="CAD25999.1"/>
    <property type="molecule type" value="Genomic_DNA"/>
</dbReference>
<dbReference type="RefSeq" id="NP_586395.1">
    <property type="nucleotide sequence ID" value="NM_001042228.1"/>
</dbReference>
<dbReference type="SMR" id="Q8SQW5"/>
<dbReference type="FunCoup" id="Q8SQW5">
    <property type="interactions" value="220"/>
</dbReference>
<dbReference type="STRING" id="284813.Q8SQW5"/>
<dbReference type="GeneID" id="860048"/>
<dbReference type="KEGG" id="ecu:ECU11_0890"/>
<dbReference type="VEuPathDB" id="MicrosporidiaDB:ECU11_0890"/>
<dbReference type="HOGENOM" id="CLU_009710_1_2_1"/>
<dbReference type="InParanoid" id="Q8SQW5"/>
<dbReference type="OMA" id="YMRMAGH"/>
<dbReference type="OrthoDB" id="5844513at2759"/>
<dbReference type="Proteomes" id="UP000000819">
    <property type="component" value="Chromosome XI"/>
</dbReference>
<dbReference type="GO" id="GO:0017101">
    <property type="term" value="C:aminoacyl-tRNA synthetase multienzyme complex"/>
    <property type="evidence" value="ECO:0007669"/>
    <property type="project" value="TreeGrafter"/>
</dbReference>
<dbReference type="GO" id="GO:0005829">
    <property type="term" value="C:cytosol"/>
    <property type="evidence" value="ECO:0007669"/>
    <property type="project" value="TreeGrafter"/>
</dbReference>
<dbReference type="GO" id="GO:0005524">
    <property type="term" value="F:ATP binding"/>
    <property type="evidence" value="ECO:0007669"/>
    <property type="project" value="UniProtKB-KW"/>
</dbReference>
<dbReference type="GO" id="GO:0004825">
    <property type="term" value="F:methionine-tRNA ligase activity"/>
    <property type="evidence" value="ECO:0007669"/>
    <property type="project" value="UniProtKB-EC"/>
</dbReference>
<dbReference type="GO" id="GO:0006431">
    <property type="term" value="P:methionyl-tRNA aminoacylation"/>
    <property type="evidence" value="ECO:0007669"/>
    <property type="project" value="InterPro"/>
</dbReference>
<dbReference type="CDD" id="cd00814">
    <property type="entry name" value="MetRS_core"/>
    <property type="match status" value="1"/>
</dbReference>
<dbReference type="Gene3D" id="3.40.50.620">
    <property type="entry name" value="HUPs"/>
    <property type="match status" value="1"/>
</dbReference>
<dbReference type="Gene3D" id="1.10.730.10">
    <property type="entry name" value="Isoleucyl-tRNA Synthetase, Domain 1"/>
    <property type="match status" value="1"/>
</dbReference>
<dbReference type="Gene3D" id="2.20.28.20">
    <property type="entry name" value="Methionyl-tRNA synthetase, Zn-domain"/>
    <property type="match status" value="1"/>
</dbReference>
<dbReference type="InterPro" id="IPR001412">
    <property type="entry name" value="aa-tRNA-synth_I_CS"/>
</dbReference>
<dbReference type="InterPro" id="IPR041872">
    <property type="entry name" value="Anticodon_Met"/>
</dbReference>
<dbReference type="InterPro" id="IPR023458">
    <property type="entry name" value="Met-tRNA_ligase_1"/>
</dbReference>
<dbReference type="InterPro" id="IPR014758">
    <property type="entry name" value="Met-tRNA_synth"/>
</dbReference>
<dbReference type="InterPro" id="IPR015413">
    <property type="entry name" value="Methionyl/Leucyl_tRNA_Synth"/>
</dbReference>
<dbReference type="InterPro" id="IPR033911">
    <property type="entry name" value="MetRS_core"/>
</dbReference>
<dbReference type="InterPro" id="IPR029038">
    <property type="entry name" value="MetRS_Zn"/>
</dbReference>
<dbReference type="InterPro" id="IPR014729">
    <property type="entry name" value="Rossmann-like_a/b/a_fold"/>
</dbReference>
<dbReference type="InterPro" id="IPR009080">
    <property type="entry name" value="tRNAsynth_Ia_anticodon-bd"/>
</dbReference>
<dbReference type="NCBIfam" id="TIGR00398">
    <property type="entry name" value="metG"/>
    <property type="match status" value="1"/>
</dbReference>
<dbReference type="PANTHER" id="PTHR45765">
    <property type="entry name" value="METHIONINE--TRNA LIGASE"/>
    <property type="match status" value="1"/>
</dbReference>
<dbReference type="PANTHER" id="PTHR45765:SF1">
    <property type="entry name" value="METHIONINE--TRNA LIGASE, CYTOPLASMIC"/>
    <property type="match status" value="1"/>
</dbReference>
<dbReference type="Pfam" id="PF19303">
    <property type="entry name" value="Anticodon_3"/>
    <property type="match status" value="1"/>
</dbReference>
<dbReference type="Pfam" id="PF09334">
    <property type="entry name" value="tRNA-synt_1g"/>
    <property type="match status" value="1"/>
</dbReference>
<dbReference type="PRINTS" id="PR01041">
    <property type="entry name" value="TRNASYNTHMET"/>
</dbReference>
<dbReference type="SUPFAM" id="SSF47323">
    <property type="entry name" value="Anticodon-binding domain of a subclass of class I aminoacyl-tRNA synthetases"/>
    <property type="match status" value="1"/>
</dbReference>
<dbReference type="SUPFAM" id="SSF57770">
    <property type="entry name" value="Methionyl-tRNA synthetase (MetRS), Zn-domain"/>
    <property type="match status" value="1"/>
</dbReference>
<dbReference type="SUPFAM" id="SSF52374">
    <property type="entry name" value="Nucleotidylyl transferase"/>
    <property type="match status" value="1"/>
</dbReference>
<dbReference type="PROSITE" id="PS00178">
    <property type="entry name" value="AA_TRNA_LIGASE_I"/>
    <property type="match status" value="1"/>
</dbReference>
<organism>
    <name type="scientific">Encephalitozoon cuniculi (strain GB-M1)</name>
    <name type="common">Microsporidian parasite</name>
    <dbReference type="NCBI Taxonomy" id="284813"/>
    <lineage>
        <taxon>Eukaryota</taxon>
        <taxon>Fungi</taxon>
        <taxon>Fungi incertae sedis</taxon>
        <taxon>Microsporidia</taxon>
        <taxon>Unikaryonidae</taxon>
        <taxon>Encephalitozoon</taxon>
    </lineage>
</organism>
<keyword id="KW-0030">Aminoacyl-tRNA synthetase</keyword>
<keyword id="KW-0067">ATP-binding</keyword>
<keyword id="KW-0963">Cytoplasm</keyword>
<keyword id="KW-0436">Ligase</keyword>
<keyword id="KW-0547">Nucleotide-binding</keyword>
<keyword id="KW-0648">Protein biosynthesis</keyword>
<keyword id="KW-1185">Reference proteome</keyword>
<sequence>MKKFITSALPYVNNQPHLGNIIGSVLSGDVYSRYCKKKGEVSVYICGTDEYGTAIEMEAISQGVTPLEICEKNRKLHKQVYDWFNIDFDYFGFTSSATHTGLVQDLFMKMYDNGHFSEVEIEQFYCEHCGLFLADRFIVGECKFCGDGRARGDQCDSCGHTYNSLELLSPRCSICSSSPVVRATTHLFFDLEAFRPSLEELYRTNGHLWSQNAQNIFRQWISMEFYPRCMTRDLKFNWGVPVPLEKFKEKVFYVWFDAPIGYLTFLKELVGEDFGEWCKDAELVQFMGKDNVAFHTVIFPAMLYATGEKYPVVRRLSATEYLQFENEKFSKSRRHGIFGLDLVGGGLGKSCMWRYYLLKIRPESTKDSNFTFSDFRQSVTADLINNLGNFVNRVLKYIQSKCNSRVSLLELDSGDKKCIEDVNELYCKYKAKMEEIKLREALQVVMEICRRGNEYIQEGVRSRDRKGHFFCLGFSIIGLVGTLLHPFIPVTSLEILRMCNLEETMFPESMRIVDGHTMGSDIRPLFEDFTTEQIEEMKRYDRPQSTGCSK</sequence>
<feature type="chain" id="PRO_0000388397" description="Probable methionine--tRNA ligase, cytoplasmic">
    <location>
        <begin position="1"/>
        <end position="550"/>
    </location>
</feature>
<feature type="short sequence motif" description="'HIGH' region" evidence="1">
    <location>
        <begin position="10"/>
        <end position="20"/>
    </location>
</feature>
<feature type="short sequence motif" description="'KMSKS' region" evidence="1">
    <location>
        <begin position="328"/>
        <end position="332"/>
    </location>
</feature>
<feature type="binding site" evidence="1">
    <location>
        <position position="331"/>
    </location>
    <ligand>
        <name>ATP</name>
        <dbReference type="ChEBI" id="CHEBI:30616"/>
    </ligand>
</feature>